<feature type="chain" id="PRO_0000410308" description="Topoisomerase 1-associated factor 1">
    <location>
        <begin position="1"/>
        <end position="1074"/>
    </location>
</feature>
<feature type="region of interest" description="Disordered" evidence="2">
    <location>
        <begin position="572"/>
        <end position="595"/>
    </location>
</feature>
<feature type="region of interest" description="Disordered" evidence="2">
    <location>
        <begin position="936"/>
        <end position="1074"/>
    </location>
</feature>
<feature type="compositionally biased region" description="Basic residues" evidence="2">
    <location>
        <begin position="948"/>
        <end position="962"/>
    </location>
</feature>
<feature type="compositionally biased region" description="Basic residues" evidence="2">
    <location>
        <begin position="978"/>
        <end position="991"/>
    </location>
</feature>
<feature type="compositionally biased region" description="Basic and acidic residues" evidence="2">
    <location>
        <begin position="1014"/>
        <end position="1031"/>
    </location>
</feature>
<feature type="compositionally biased region" description="Basic residues" evidence="2">
    <location>
        <begin position="1046"/>
        <end position="1055"/>
    </location>
</feature>
<reference key="1">
    <citation type="journal article" date="2005" name="Science">
        <title>The genome of the basidiomycetous yeast and human pathogen Cryptococcus neoformans.</title>
        <authorList>
            <person name="Loftus B.J."/>
            <person name="Fung E."/>
            <person name="Roncaglia P."/>
            <person name="Rowley D."/>
            <person name="Amedeo P."/>
            <person name="Bruno D."/>
            <person name="Vamathevan J."/>
            <person name="Miranda M."/>
            <person name="Anderson I.J."/>
            <person name="Fraser J.A."/>
            <person name="Allen J.E."/>
            <person name="Bosdet I.E."/>
            <person name="Brent M.R."/>
            <person name="Chiu R."/>
            <person name="Doering T.L."/>
            <person name="Donlin M.J."/>
            <person name="D'Souza C.A."/>
            <person name="Fox D.S."/>
            <person name="Grinberg V."/>
            <person name="Fu J."/>
            <person name="Fukushima M."/>
            <person name="Haas B.J."/>
            <person name="Huang J.C."/>
            <person name="Janbon G."/>
            <person name="Jones S.J.M."/>
            <person name="Koo H.L."/>
            <person name="Krzywinski M.I."/>
            <person name="Kwon-Chung K.J."/>
            <person name="Lengeler K.B."/>
            <person name="Maiti R."/>
            <person name="Marra M.A."/>
            <person name="Marra R.E."/>
            <person name="Mathewson C.A."/>
            <person name="Mitchell T.G."/>
            <person name="Pertea M."/>
            <person name="Riggs F.R."/>
            <person name="Salzberg S.L."/>
            <person name="Schein J.E."/>
            <person name="Shvartsbeyn A."/>
            <person name="Shin H."/>
            <person name="Shumway M."/>
            <person name="Specht C.A."/>
            <person name="Suh B.B."/>
            <person name="Tenney A."/>
            <person name="Utterback T.R."/>
            <person name="Wickes B.L."/>
            <person name="Wortman J.R."/>
            <person name="Wye N.H."/>
            <person name="Kronstad J.W."/>
            <person name="Lodge J.K."/>
            <person name="Heitman J."/>
            <person name="Davis R.W."/>
            <person name="Fraser C.M."/>
            <person name="Hyman R.W."/>
        </authorList>
    </citation>
    <scope>NUCLEOTIDE SEQUENCE [LARGE SCALE GENOMIC DNA]</scope>
    <source>
        <strain>B-3501A</strain>
    </source>
</reference>
<protein>
    <recommendedName>
        <fullName>Topoisomerase 1-associated factor 1</fullName>
    </recommendedName>
</protein>
<dbReference type="EMBL" id="AAEY01000032">
    <property type="protein sequence ID" value="EAL20110.1"/>
    <property type="molecule type" value="Genomic_DNA"/>
</dbReference>
<dbReference type="RefSeq" id="XP_774757.1">
    <property type="nucleotide sequence ID" value="XM_769664.1"/>
</dbReference>
<dbReference type="SMR" id="P0CR93"/>
<dbReference type="GeneID" id="4936988"/>
<dbReference type="KEGG" id="cnb:CNBF4360"/>
<dbReference type="VEuPathDB" id="FungiDB:CNBF4360"/>
<dbReference type="HOGENOM" id="CLU_004294_1_0_1"/>
<dbReference type="OrthoDB" id="6211at5206"/>
<dbReference type="GO" id="GO:0031298">
    <property type="term" value="C:replication fork protection complex"/>
    <property type="evidence" value="ECO:0007669"/>
    <property type="project" value="TreeGrafter"/>
</dbReference>
<dbReference type="GO" id="GO:0003677">
    <property type="term" value="F:DNA binding"/>
    <property type="evidence" value="ECO:0007669"/>
    <property type="project" value="TreeGrafter"/>
</dbReference>
<dbReference type="GO" id="GO:0006281">
    <property type="term" value="P:DNA repair"/>
    <property type="evidence" value="ECO:0007669"/>
    <property type="project" value="UniProtKB-KW"/>
</dbReference>
<dbReference type="GO" id="GO:0000076">
    <property type="term" value="P:DNA replication checkpoint signaling"/>
    <property type="evidence" value="ECO:0007669"/>
    <property type="project" value="TreeGrafter"/>
</dbReference>
<dbReference type="GO" id="GO:0051321">
    <property type="term" value="P:meiotic cell cycle"/>
    <property type="evidence" value="ECO:0007669"/>
    <property type="project" value="UniProtKB-KW"/>
</dbReference>
<dbReference type="GO" id="GO:0043111">
    <property type="term" value="P:replication fork arrest"/>
    <property type="evidence" value="ECO:0007669"/>
    <property type="project" value="TreeGrafter"/>
</dbReference>
<dbReference type="InterPro" id="IPR044998">
    <property type="entry name" value="Timeless"/>
</dbReference>
<dbReference type="InterPro" id="IPR006906">
    <property type="entry name" value="Timeless_N"/>
</dbReference>
<dbReference type="PANTHER" id="PTHR22940:SF4">
    <property type="entry name" value="PROTEIN TIMELESS HOMOLOG"/>
    <property type="match status" value="1"/>
</dbReference>
<dbReference type="PANTHER" id="PTHR22940">
    <property type="entry name" value="TIMEOUT/TIMELESS-2"/>
    <property type="match status" value="1"/>
</dbReference>
<dbReference type="Pfam" id="PF04821">
    <property type="entry name" value="TIMELESS"/>
    <property type="match status" value="1"/>
</dbReference>
<accession>P0CR93</accession>
<accession>Q55QA1</accession>
<accession>Q5KFW4</accession>
<name>TOF1_CRYNB</name>
<sequence>MELPDSPPPLDAPSPPHFLDAPQDRWNVFYPAVQTLVNALGGYEEVESPPDSGIFETVYRPGDSVLGVLKDLKKLWRKDDEDDERTVARCMYRAELMKELVAIVVECAERGEWGRKVALVACDLIAALTWPIDVAQELKEIEDEGPVVTDYASLLRAQLEYKALFLKTTKPLKSILSLMVPCLAKPRKDEKDSRIISLGLHVVRNLLAIKDAVAEGTATGEKEEFAHLQSDLITQLDSLTYLQLFLTLASCADKTDLNPFNVIVLDILHLIFRGIKPSELVQDQKRVPIDSLAKLLEKEKKQKALNSRVGSTRHSRFGTTITVKTAEQRVVLHRQTAIIENPGKILDMTKRKKAVVAKRMDDLTVFVNLSSDAMVILQSFSKAFLEICYNTFIESILRDIRMERTKIRPSDNIRVFYLSSFFIEYLLLLRHKLLQKGGSRRLEELPLGLVAQIAEMDSVKWLFARLRICWDDKPKAWTELQACIECFTQILLLIDDMSTSTNEEDVEVAEILQHQLYYNYDILDSALAVVREYKNQSIAYLDSIIHFAYVLLRMLEKYSKTKAFMFIRKRKNTHKKRKERQAASQANADREQRKIPEEYGDEGEEAFAPDEDAPSYAEHAFTFQSFEKRFAQEAVVNTLLTYLERFLEFDGPEPMKRVVGLMHRQVIKAHAEGLYFKVSTLIIFRRILDKQHVLPAAPSSRDLITLITYILRKFFKHVEKEPFTLVEALSSKSRGKWKTVGGGSDDDDDEMAGQRGRIKEKMGPVELQFIKKHKFSWSQQMSIAFAIIWGDGHGYLIKWIVEVLEQVLAAKQEIVLTTDGGINGDEDEEDEDGNARVRRFGRPSDEAISKFTQFDLQPEESEQITAVTSNPHFRLMLKLLSFDLPPPPMELDFEEDVSSEELALAREKSDSAWFLPANVLPSDIEASIGALKQYMEEPPTLDDDPKKLLRRKARATRRRRRSPSVESYDSETGEVRPGHQHKKNPRQKRAKKAVETQNYKSAAFIEDSDDEDPEATRRFFENEERLRREMDELAAQGGHPMMERGVKRKRGKKNGKGAISDTPPPSQRGNDRET</sequence>
<organism>
    <name type="scientific">Cryptococcus neoformans var. neoformans serotype D (strain B-3501A)</name>
    <name type="common">Filobasidiella neoformans</name>
    <dbReference type="NCBI Taxonomy" id="283643"/>
    <lineage>
        <taxon>Eukaryota</taxon>
        <taxon>Fungi</taxon>
        <taxon>Dikarya</taxon>
        <taxon>Basidiomycota</taxon>
        <taxon>Agaricomycotina</taxon>
        <taxon>Tremellomycetes</taxon>
        <taxon>Tremellales</taxon>
        <taxon>Cryptococcaceae</taxon>
        <taxon>Cryptococcus</taxon>
        <taxon>Cryptococcus neoformans species complex</taxon>
    </lineage>
</organism>
<comment type="function">
    <text evidence="1">Involved in chromosome segregation during meiosis and DNA damage repair.</text>
</comment>
<comment type="subcellular location">
    <subcellularLocation>
        <location evidence="1">Nucleus</location>
    </subcellularLocation>
</comment>
<comment type="similarity">
    <text evidence="3">Belongs to the timeless family.</text>
</comment>
<gene>
    <name type="primary">TOF1</name>
    <name type="ordered locus">CNBF4360</name>
</gene>
<keyword id="KW-0131">Cell cycle</keyword>
<keyword id="KW-0227">DNA damage</keyword>
<keyword id="KW-0234">DNA repair</keyword>
<keyword id="KW-0236">DNA replication inhibitor</keyword>
<keyword id="KW-0469">Meiosis</keyword>
<keyword id="KW-0539">Nucleus</keyword>
<evidence type="ECO:0000250" key="1"/>
<evidence type="ECO:0000256" key="2">
    <source>
        <dbReference type="SAM" id="MobiDB-lite"/>
    </source>
</evidence>
<evidence type="ECO:0000305" key="3"/>
<proteinExistence type="inferred from homology"/>